<dbReference type="EC" id="4.2.1.11" evidence="1"/>
<dbReference type="EMBL" id="AP006878">
    <property type="protein sequence ID" value="BAD86295.1"/>
    <property type="molecule type" value="Genomic_DNA"/>
</dbReference>
<dbReference type="RefSeq" id="WP_011251056.1">
    <property type="nucleotide sequence ID" value="NC_006624.1"/>
</dbReference>
<dbReference type="SMR" id="Q5JEV6"/>
<dbReference type="FunCoup" id="Q5JEV6">
    <property type="interactions" value="145"/>
</dbReference>
<dbReference type="IntAct" id="Q5JEV6">
    <property type="interactions" value="1"/>
</dbReference>
<dbReference type="MINT" id="Q5JEV6"/>
<dbReference type="STRING" id="69014.TK2106"/>
<dbReference type="EnsemblBacteria" id="BAD86295">
    <property type="protein sequence ID" value="BAD86295"/>
    <property type="gene ID" value="TK2106"/>
</dbReference>
<dbReference type="GeneID" id="78448641"/>
<dbReference type="KEGG" id="tko:TK2106"/>
<dbReference type="PATRIC" id="fig|69014.16.peg.2062"/>
<dbReference type="eggNOG" id="arCOG01169">
    <property type="taxonomic scope" value="Archaea"/>
</dbReference>
<dbReference type="HOGENOM" id="CLU_031223_2_1_2"/>
<dbReference type="InParanoid" id="Q5JEV6"/>
<dbReference type="OrthoDB" id="8680at2157"/>
<dbReference type="PhylomeDB" id="Q5JEV6"/>
<dbReference type="UniPathway" id="UPA00109">
    <property type="reaction ID" value="UER00187"/>
</dbReference>
<dbReference type="Proteomes" id="UP000000536">
    <property type="component" value="Chromosome"/>
</dbReference>
<dbReference type="GO" id="GO:0009986">
    <property type="term" value="C:cell surface"/>
    <property type="evidence" value="ECO:0007669"/>
    <property type="project" value="UniProtKB-SubCell"/>
</dbReference>
<dbReference type="GO" id="GO:0005576">
    <property type="term" value="C:extracellular region"/>
    <property type="evidence" value="ECO:0007669"/>
    <property type="project" value="UniProtKB-SubCell"/>
</dbReference>
<dbReference type="GO" id="GO:0000015">
    <property type="term" value="C:phosphopyruvate hydratase complex"/>
    <property type="evidence" value="ECO:0000318"/>
    <property type="project" value="GO_Central"/>
</dbReference>
<dbReference type="GO" id="GO:0000287">
    <property type="term" value="F:magnesium ion binding"/>
    <property type="evidence" value="ECO:0007669"/>
    <property type="project" value="UniProtKB-UniRule"/>
</dbReference>
<dbReference type="GO" id="GO:0004634">
    <property type="term" value="F:phosphopyruvate hydratase activity"/>
    <property type="evidence" value="ECO:0000318"/>
    <property type="project" value="GO_Central"/>
</dbReference>
<dbReference type="GO" id="GO:0006096">
    <property type="term" value="P:glycolytic process"/>
    <property type="evidence" value="ECO:0000318"/>
    <property type="project" value="GO_Central"/>
</dbReference>
<dbReference type="CDD" id="cd03313">
    <property type="entry name" value="enolase"/>
    <property type="match status" value="1"/>
</dbReference>
<dbReference type="FunFam" id="3.30.390.10:FF:000001">
    <property type="entry name" value="Enolase"/>
    <property type="match status" value="1"/>
</dbReference>
<dbReference type="Gene3D" id="3.20.20.120">
    <property type="entry name" value="Enolase-like C-terminal domain"/>
    <property type="match status" value="1"/>
</dbReference>
<dbReference type="Gene3D" id="3.30.390.10">
    <property type="entry name" value="Enolase-like, N-terminal domain"/>
    <property type="match status" value="1"/>
</dbReference>
<dbReference type="HAMAP" id="MF_00318">
    <property type="entry name" value="Enolase"/>
    <property type="match status" value="1"/>
</dbReference>
<dbReference type="InterPro" id="IPR000941">
    <property type="entry name" value="Enolase"/>
</dbReference>
<dbReference type="InterPro" id="IPR036849">
    <property type="entry name" value="Enolase-like_C_sf"/>
</dbReference>
<dbReference type="InterPro" id="IPR029017">
    <property type="entry name" value="Enolase-like_N"/>
</dbReference>
<dbReference type="InterPro" id="IPR020810">
    <property type="entry name" value="Enolase_C"/>
</dbReference>
<dbReference type="InterPro" id="IPR020809">
    <property type="entry name" value="Enolase_CS"/>
</dbReference>
<dbReference type="InterPro" id="IPR020811">
    <property type="entry name" value="Enolase_N"/>
</dbReference>
<dbReference type="NCBIfam" id="TIGR01060">
    <property type="entry name" value="eno"/>
    <property type="match status" value="1"/>
</dbReference>
<dbReference type="PANTHER" id="PTHR11902">
    <property type="entry name" value="ENOLASE"/>
    <property type="match status" value="1"/>
</dbReference>
<dbReference type="PANTHER" id="PTHR11902:SF1">
    <property type="entry name" value="ENOLASE"/>
    <property type="match status" value="1"/>
</dbReference>
<dbReference type="Pfam" id="PF00113">
    <property type="entry name" value="Enolase_C"/>
    <property type="match status" value="1"/>
</dbReference>
<dbReference type="Pfam" id="PF03952">
    <property type="entry name" value="Enolase_N"/>
    <property type="match status" value="1"/>
</dbReference>
<dbReference type="PIRSF" id="PIRSF001400">
    <property type="entry name" value="Enolase"/>
    <property type="match status" value="1"/>
</dbReference>
<dbReference type="PRINTS" id="PR00148">
    <property type="entry name" value="ENOLASE"/>
</dbReference>
<dbReference type="SFLD" id="SFLDS00001">
    <property type="entry name" value="Enolase"/>
    <property type="match status" value="1"/>
</dbReference>
<dbReference type="SFLD" id="SFLDF00002">
    <property type="entry name" value="enolase"/>
    <property type="match status" value="1"/>
</dbReference>
<dbReference type="SMART" id="SM01192">
    <property type="entry name" value="Enolase_C"/>
    <property type="match status" value="1"/>
</dbReference>
<dbReference type="SMART" id="SM01193">
    <property type="entry name" value="Enolase_N"/>
    <property type="match status" value="1"/>
</dbReference>
<dbReference type="SUPFAM" id="SSF51604">
    <property type="entry name" value="Enolase C-terminal domain-like"/>
    <property type="match status" value="1"/>
</dbReference>
<dbReference type="SUPFAM" id="SSF54826">
    <property type="entry name" value="Enolase N-terminal domain-like"/>
    <property type="match status" value="1"/>
</dbReference>
<dbReference type="PROSITE" id="PS00164">
    <property type="entry name" value="ENOLASE"/>
    <property type="match status" value="1"/>
</dbReference>
<gene>
    <name evidence="1" type="primary">eno</name>
    <name type="ordered locus">TK2106</name>
</gene>
<keyword id="KW-0963">Cytoplasm</keyword>
<keyword id="KW-0324">Glycolysis</keyword>
<keyword id="KW-0456">Lyase</keyword>
<keyword id="KW-0460">Magnesium</keyword>
<keyword id="KW-0479">Metal-binding</keyword>
<keyword id="KW-1185">Reference proteome</keyword>
<keyword id="KW-0964">Secreted</keyword>
<sequence length="430" mass="46792">MENPFEITNVIAREILDSRGNPTVEVEVYTPISMGRAAVPSGASTGTHEALELRDGGSRYHGKGVRRAVENVNKIIAPEIIGMDVTWQRDIDTLMLELDGTENKSNLGANAILGVSLAVAKAAANALGLPLYQYIGGTNAYVMPVPMSNVINGGVHAGNELDFQEFMIMPVGADSFREAIRWVSETYHVLKKVIMEKYGRNAVNVGDEGGFAPPMKEVTEPLDVLIKAIEEAGYKPGDEIAFALDAASSEFFDGEKGKYVVAGKEYDKGELLELYRELVTTYPIVSIEDPFHEEDWEGFVMITKELGSKVQIVGDDLFVTNPKRIRKGIEMGAANALLLKVNQIGTLSEAIDAAYTSFRAGYGVVVSHRSGETEDATIADLAVALNAGQIKTGAPARSDRNAKYNQLIRIEEELEGIAVYPGKKFRNPFL</sequence>
<name>ENO_THEKO</name>
<evidence type="ECO:0000255" key="1">
    <source>
        <dbReference type="HAMAP-Rule" id="MF_00318"/>
    </source>
</evidence>
<organism>
    <name type="scientific">Thermococcus kodakarensis (strain ATCC BAA-918 / JCM 12380 / KOD1)</name>
    <name type="common">Pyrococcus kodakaraensis (strain KOD1)</name>
    <dbReference type="NCBI Taxonomy" id="69014"/>
    <lineage>
        <taxon>Archaea</taxon>
        <taxon>Methanobacteriati</taxon>
        <taxon>Methanobacteriota</taxon>
        <taxon>Thermococci</taxon>
        <taxon>Thermococcales</taxon>
        <taxon>Thermococcaceae</taxon>
        <taxon>Thermococcus</taxon>
    </lineage>
</organism>
<proteinExistence type="inferred from homology"/>
<comment type="function">
    <text evidence="1">Catalyzes the reversible conversion of 2-phosphoglycerate (2-PG) into phosphoenolpyruvate (PEP). It is essential for the degradation of carbohydrates via glycolysis.</text>
</comment>
<comment type="catalytic activity">
    <reaction evidence="1">
        <text>(2R)-2-phosphoglycerate = phosphoenolpyruvate + H2O</text>
        <dbReference type="Rhea" id="RHEA:10164"/>
        <dbReference type="ChEBI" id="CHEBI:15377"/>
        <dbReference type="ChEBI" id="CHEBI:58289"/>
        <dbReference type="ChEBI" id="CHEBI:58702"/>
        <dbReference type="EC" id="4.2.1.11"/>
    </reaction>
</comment>
<comment type="cofactor">
    <cofactor evidence="1">
        <name>Mg(2+)</name>
        <dbReference type="ChEBI" id="CHEBI:18420"/>
    </cofactor>
    <text evidence="1">Binds a second Mg(2+) ion via substrate during catalysis.</text>
</comment>
<comment type="pathway">
    <text evidence="1">Carbohydrate degradation; glycolysis; pyruvate from D-glyceraldehyde 3-phosphate: step 4/5.</text>
</comment>
<comment type="subcellular location">
    <subcellularLocation>
        <location evidence="1">Cytoplasm</location>
    </subcellularLocation>
    <subcellularLocation>
        <location evidence="1">Secreted</location>
    </subcellularLocation>
    <subcellularLocation>
        <location evidence="1">Cell surface</location>
    </subcellularLocation>
    <text evidence="1">Fractions of enolase are present in both the cytoplasm and on the cell surface.</text>
</comment>
<comment type="similarity">
    <text evidence="1">Belongs to the enolase family.</text>
</comment>
<protein>
    <recommendedName>
        <fullName evidence="1">Enolase</fullName>
        <ecNumber evidence="1">4.2.1.11</ecNumber>
    </recommendedName>
    <alternativeName>
        <fullName evidence="1">2-phospho-D-glycerate hydro-lyase</fullName>
    </alternativeName>
    <alternativeName>
        <fullName evidence="1">2-phosphoglycerate dehydratase</fullName>
    </alternativeName>
</protein>
<reference key="1">
    <citation type="journal article" date="2005" name="Genome Res.">
        <title>Complete genome sequence of the hyperthermophilic archaeon Thermococcus kodakaraensis KOD1 and comparison with Pyrococcus genomes.</title>
        <authorList>
            <person name="Fukui T."/>
            <person name="Atomi H."/>
            <person name="Kanai T."/>
            <person name="Matsumi R."/>
            <person name="Fujiwara S."/>
            <person name="Imanaka T."/>
        </authorList>
    </citation>
    <scope>NUCLEOTIDE SEQUENCE [LARGE SCALE GENOMIC DNA]</scope>
    <source>
        <strain>ATCC BAA-918 / JCM 12380 / KOD1</strain>
    </source>
</reference>
<accession>Q5JEV6</accession>
<feature type="chain" id="PRO_0000134033" description="Enolase">
    <location>
        <begin position="1"/>
        <end position="430"/>
    </location>
</feature>
<feature type="active site" description="Proton donor" evidence="1">
    <location>
        <position position="208"/>
    </location>
</feature>
<feature type="active site" description="Proton acceptor" evidence="1">
    <location>
        <position position="340"/>
    </location>
</feature>
<feature type="binding site" evidence="1">
    <location>
        <position position="164"/>
    </location>
    <ligand>
        <name>(2R)-2-phosphoglycerate</name>
        <dbReference type="ChEBI" id="CHEBI:58289"/>
    </ligand>
</feature>
<feature type="binding site" evidence="1">
    <location>
        <position position="245"/>
    </location>
    <ligand>
        <name>Mg(2+)</name>
        <dbReference type="ChEBI" id="CHEBI:18420"/>
    </ligand>
</feature>
<feature type="binding site" evidence="1">
    <location>
        <position position="288"/>
    </location>
    <ligand>
        <name>Mg(2+)</name>
        <dbReference type="ChEBI" id="CHEBI:18420"/>
    </ligand>
</feature>
<feature type="binding site" evidence="1">
    <location>
        <position position="315"/>
    </location>
    <ligand>
        <name>Mg(2+)</name>
        <dbReference type="ChEBI" id="CHEBI:18420"/>
    </ligand>
</feature>
<feature type="binding site" evidence="1">
    <location>
        <position position="340"/>
    </location>
    <ligand>
        <name>(2R)-2-phosphoglycerate</name>
        <dbReference type="ChEBI" id="CHEBI:58289"/>
    </ligand>
</feature>
<feature type="binding site" evidence="1">
    <location>
        <position position="369"/>
    </location>
    <ligand>
        <name>(2R)-2-phosphoglycerate</name>
        <dbReference type="ChEBI" id="CHEBI:58289"/>
    </ligand>
</feature>
<feature type="binding site" evidence="1">
    <location>
        <position position="370"/>
    </location>
    <ligand>
        <name>(2R)-2-phosphoglycerate</name>
        <dbReference type="ChEBI" id="CHEBI:58289"/>
    </ligand>
</feature>
<feature type="binding site" evidence="1">
    <location>
        <position position="391"/>
    </location>
    <ligand>
        <name>(2R)-2-phosphoglycerate</name>
        <dbReference type="ChEBI" id="CHEBI:58289"/>
    </ligand>
</feature>